<dbReference type="EC" id="2.7.11.1"/>
<dbReference type="EC" id="3.6.1.-" evidence="1"/>
<dbReference type="EMBL" id="AL590445">
    <property type="protein sequence ID" value="CAD26627.2"/>
    <property type="molecule type" value="Genomic_DNA"/>
</dbReference>
<dbReference type="RefSeq" id="NP_597450.1">
    <property type="nucleotide sequence ID" value="NM_001041316.1"/>
</dbReference>
<dbReference type="SMR" id="Q8SVI7"/>
<dbReference type="STRING" id="284813.Q8SVI7"/>
<dbReference type="GeneID" id="859116"/>
<dbReference type="KEGG" id="ecu:ECU05_1070"/>
<dbReference type="VEuPathDB" id="MicrosporidiaDB:ECU05_1070"/>
<dbReference type="HOGENOM" id="CLU_018693_3_1_1"/>
<dbReference type="InParanoid" id="Q8SVI7"/>
<dbReference type="OrthoDB" id="205248at2759"/>
<dbReference type="Proteomes" id="UP000000819">
    <property type="component" value="Chromosome V"/>
</dbReference>
<dbReference type="GO" id="GO:0005737">
    <property type="term" value="C:cytoplasm"/>
    <property type="evidence" value="ECO:0007669"/>
    <property type="project" value="UniProtKB-SubCell"/>
</dbReference>
<dbReference type="GO" id="GO:0005524">
    <property type="term" value="F:ATP binding"/>
    <property type="evidence" value="ECO:0007669"/>
    <property type="project" value="UniProtKB-KW"/>
</dbReference>
<dbReference type="GO" id="GO:0016787">
    <property type="term" value="F:hydrolase activity"/>
    <property type="evidence" value="ECO:0007669"/>
    <property type="project" value="UniProtKB-KW"/>
</dbReference>
<dbReference type="GO" id="GO:0046872">
    <property type="term" value="F:metal ion binding"/>
    <property type="evidence" value="ECO:0007669"/>
    <property type="project" value="UniProtKB-KW"/>
</dbReference>
<dbReference type="GO" id="GO:0106310">
    <property type="term" value="F:protein serine kinase activity"/>
    <property type="evidence" value="ECO:0007669"/>
    <property type="project" value="RHEA"/>
</dbReference>
<dbReference type="GO" id="GO:0004674">
    <property type="term" value="F:protein serine/threonine kinase activity"/>
    <property type="evidence" value="ECO:0007669"/>
    <property type="project" value="UniProtKB-KW"/>
</dbReference>
<dbReference type="GO" id="GO:0042254">
    <property type="term" value="P:ribosome biogenesis"/>
    <property type="evidence" value="ECO:0007669"/>
    <property type="project" value="UniProtKB-KW"/>
</dbReference>
<dbReference type="CDD" id="cd05145">
    <property type="entry name" value="RIO1_like"/>
    <property type="match status" value="1"/>
</dbReference>
<dbReference type="Gene3D" id="3.30.200.20">
    <property type="entry name" value="Phosphorylase Kinase, domain 1"/>
    <property type="match status" value="1"/>
</dbReference>
<dbReference type="Gene3D" id="1.10.510.10">
    <property type="entry name" value="Transferase(Phosphotransferase) domain 1"/>
    <property type="match status" value="1"/>
</dbReference>
<dbReference type="InterPro" id="IPR011009">
    <property type="entry name" value="Kinase-like_dom_sf"/>
</dbReference>
<dbReference type="InterPro" id="IPR051272">
    <property type="entry name" value="RIO-type_Ser/Thr_kinase"/>
</dbReference>
<dbReference type="InterPro" id="IPR018934">
    <property type="entry name" value="RIO_dom"/>
</dbReference>
<dbReference type="InterPro" id="IPR000687">
    <property type="entry name" value="RIO_kinase"/>
</dbReference>
<dbReference type="InterPro" id="IPR018935">
    <property type="entry name" value="RIO_kinase_CS"/>
</dbReference>
<dbReference type="PANTHER" id="PTHR45723">
    <property type="entry name" value="SERINE/THREONINE-PROTEIN KINASE RIO1"/>
    <property type="match status" value="1"/>
</dbReference>
<dbReference type="Pfam" id="PF01163">
    <property type="entry name" value="RIO1"/>
    <property type="match status" value="1"/>
</dbReference>
<dbReference type="SMART" id="SM00090">
    <property type="entry name" value="RIO"/>
    <property type="match status" value="1"/>
</dbReference>
<dbReference type="SUPFAM" id="SSF56112">
    <property type="entry name" value="Protein kinase-like (PK-like)"/>
    <property type="match status" value="1"/>
</dbReference>
<dbReference type="PROSITE" id="PS01245">
    <property type="entry name" value="RIO1"/>
    <property type="match status" value="1"/>
</dbReference>
<sequence length="387" mass="44100">MKETRAEKRKKDKSDRATVDKVLDKRTLKVLERLQARGKLVNLQGSLCTGKESNVYLGEASTSLCSKFIKNRYSVTEEPGREGQIVPVVVKIFKTSIMSFRDRERYIRSEKRFQRFCTSNSRKLIKVWAEKEVRNLKRLNNAGIPSPEPIYLKNNILVMTQIGRCSEVAPRLRDASIKDLEGCYQQCVKIIRDMYKKAGLVHADLSEFNLLYFEGVVYVIDVGQSVEIDHDNAQRFLIMDINNINSFFSRKGVSVAKGNDLFEEISGNVIPLYLKDIDIGRDAFIPSRVSEVGNEEDLLAFAADSRSREFGSTTDSDLSSTGEASVEDSDASLGATESRGGGNIREEKKRKKKTVKELNRIRRASRISKKEKKRIFKRYIGMKKRKN</sequence>
<comment type="function">
    <text evidence="1 3">Required for the final endonucleolytic cleavage at site D converting 20S pre-rRNA into the mature 18S rRNA. Required for the final steps of cytoplasmic maturation of the 40S ribosomal subunit. Despite the protein kinase domain is proposed to act predominantly as an ATPase. Has a role in the cell cycle where it is required for entrance into S-phase and in the control of the onset of anaphase. Appears to also be involved in the maintenance of chromosome stability and correct mitotic segregation (By similarity).</text>
</comment>
<comment type="catalytic activity">
    <reaction>
        <text>L-seryl-[protein] + ATP = O-phospho-L-seryl-[protein] + ADP + H(+)</text>
        <dbReference type="Rhea" id="RHEA:17989"/>
        <dbReference type="Rhea" id="RHEA-COMP:9863"/>
        <dbReference type="Rhea" id="RHEA-COMP:11604"/>
        <dbReference type="ChEBI" id="CHEBI:15378"/>
        <dbReference type="ChEBI" id="CHEBI:29999"/>
        <dbReference type="ChEBI" id="CHEBI:30616"/>
        <dbReference type="ChEBI" id="CHEBI:83421"/>
        <dbReference type="ChEBI" id="CHEBI:456216"/>
        <dbReference type="EC" id="2.7.11.1"/>
    </reaction>
</comment>
<comment type="catalytic activity">
    <reaction>
        <text>L-threonyl-[protein] + ATP = O-phospho-L-threonyl-[protein] + ADP + H(+)</text>
        <dbReference type="Rhea" id="RHEA:46608"/>
        <dbReference type="Rhea" id="RHEA-COMP:11060"/>
        <dbReference type="Rhea" id="RHEA-COMP:11605"/>
        <dbReference type="ChEBI" id="CHEBI:15378"/>
        <dbReference type="ChEBI" id="CHEBI:30013"/>
        <dbReference type="ChEBI" id="CHEBI:30616"/>
        <dbReference type="ChEBI" id="CHEBI:61977"/>
        <dbReference type="ChEBI" id="CHEBI:456216"/>
        <dbReference type="EC" id="2.7.11.1"/>
    </reaction>
</comment>
<comment type="catalytic activity">
    <reaction evidence="1">
        <text>ATP + H2O = ADP + phosphate + H(+)</text>
        <dbReference type="Rhea" id="RHEA:13065"/>
        <dbReference type="ChEBI" id="CHEBI:15377"/>
        <dbReference type="ChEBI" id="CHEBI:15378"/>
        <dbReference type="ChEBI" id="CHEBI:30616"/>
        <dbReference type="ChEBI" id="CHEBI:43474"/>
        <dbReference type="ChEBI" id="CHEBI:456216"/>
    </reaction>
</comment>
<comment type="cofactor">
    <cofactor evidence="6">
        <name>Mg(2+)</name>
        <dbReference type="ChEBI" id="CHEBI:18420"/>
    </cofactor>
</comment>
<comment type="subcellular location">
    <subcellularLocation>
        <location evidence="2 3">Cytoplasm</location>
    </subcellularLocation>
</comment>
<comment type="similarity">
    <text evidence="6">Belongs to the protein kinase superfamily. RIO-type Ser/Thr kinase family.</text>
</comment>
<proteinExistence type="inferred from homology"/>
<accession>Q8SVI7</accession>
<gene>
    <name type="primary">RIO1</name>
    <name type="ordered locus">ECU05_1070</name>
</gene>
<feature type="chain" id="PRO_0000384426" description="Probable serine/threonine-protein kinase RIO1 homolog">
    <location>
        <begin position="1"/>
        <end position="387"/>
    </location>
</feature>
<feature type="domain" description="Protein kinase">
    <location>
        <begin position="41"/>
        <end position="387"/>
    </location>
</feature>
<feature type="region of interest" description="Disordered" evidence="5">
    <location>
        <begin position="309"/>
        <end position="372"/>
    </location>
</feature>
<feature type="compositionally biased region" description="Low complexity" evidence="5">
    <location>
        <begin position="312"/>
        <end position="321"/>
    </location>
</feature>
<feature type="compositionally biased region" description="Basic residues" evidence="5">
    <location>
        <begin position="361"/>
        <end position="372"/>
    </location>
</feature>
<feature type="active site" description="Proton acceptor" evidence="4">
    <location>
        <position position="204"/>
    </location>
</feature>
<feature type="active site" description="4-aspartylphosphate intermediate" evidence="4">
    <location>
        <position position="221"/>
    </location>
</feature>
<feature type="binding site" evidence="4">
    <location>
        <position position="91"/>
    </location>
    <ligand>
        <name>ATP</name>
        <dbReference type="ChEBI" id="CHEBI:30616"/>
    </ligand>
</feature>
<feature type="binding site" evidence="4">
    <location>
        <position position="209"/>
    </location>
    <ligand>
        <name>Mg(2+)</name>
        <dbReference type="ChEBI" id="CHEBI:18420"/>
    </ligand>
</feature>
<feature type="binding site" evidence="4">
    <location>
        <position position="221"/>
    </location>
    <ligand>
        <name>Mg(2+)</name>
        <dbReference type="ChEBI" id="CHEBI:18420"/>
    </ligand>
</feature>
<name>RIO1_ENCCU</name>
<protein>
    <recommendedName>
        <fullName>Probable serine/threonine-protein kinase RIO1 homolog</fullName>
        <ecNumber>2.7.11.1</ecNumber>
        <ecNumber evidence="1">3.6.1.-</ecNumber>
    </recommendedName>
</protein>
<keyword id="KW-0067">ATP-binding</keyword>
<keyword id="KW-0963">Cytoplasm</keyword>
<keyword id="KW-0378">Hydrolase</keyword>
<keyword id="KW-0418">Kinase</keyword>
<keyword id="KW-0460">Magnesium</keyword>
<keyword id="KW-0479">Metal-binding</keyword>
<keyword id="KW-0547">Nucleotide-binding</keyword>
<keyword id="KW-1185">Reference proteome</keyword>
<keyword id="KW-0690">Ribosome biogenesis</keyword>
<keyword id="KW-0723">Serine/threonine-protein kinase</keyword>
<keyword id="KW-0808">Transferase</keyword>
<evidence type="ECO:0000250" key="1">
    <source>
        <dbReference type="UniProtKB" id="G0S3J5"/>
    </source>
</evidence>
<evidence type="ECO:0000250" key="2">
    <source>
        <dbReference type="UniProtKB" id="O42650"/>
    </source>
</evidence>
<evidence type="ECO:0000250" key="3">
    <source>
        <dbReference type="UniProtKB" id="Q12196"/>
    </source>
</evidence>
<evidence type="ECO:0000250" key="4">
    <source>
        <dbReference type="UniProtKB" id="Q9BRS2"/>
    </source>
</evidence>
<evidence type="ECO:0000256" key="5">
    <source>
        <dbReference type="SAM" id="MobiDB-lite"/>
    </source>
</evidence>
<evidence type="ECO:0000305" key="6"/>
<organism>
    <name type="scientific">Encephalitozoon cuniculi (strain GB-M1)</name>
    <name type="common">Microsporidian parasite</name>
    <dbReference type="NCBI Taxonomy" id="284813"/>
    <lineage>
        <taxon>Eukaryota</taxon>
        <taxon>Fungi</taxon>
        <taxon>Fungi incertae sedis</taxon>
        <taxon>Microsporidia</taxon>
        <taxon>Unikaryonidae</taxon>
        <taxon>Encephalitozoon</taxon>
    </lineage>
</organism>
<reference key="1">
    <citation type="journal article" date="2001" name="Nature">
        <title>Genome sequence and gene compaction of the eukaryote parasite Encephalitozoon cuniculi.</title>
        <authorList>
            <person name="Katinka M.D."/>
            <person name="Duprat S."/>
            <person name="Cornillot E."/>
            <person name="Metenier G."/>
            <person name="Thomarat F."/>
            <person name="Prensier G."/>
            <person name="Barbe V."/>
            <person name="Peyretaillade E."/>
            <person name="Brottier P."/>
            <person name="Wincker P."/>
            <person name="Delbac F."/>
            <person name="El Alaoui H."/>
            <person name="Peyret P."/>
            <person name="Saurin W."/>
            <person name="Gouy M."/>
            <person name="Weissenbach J."/>
            <person name="Vivares C.P."/>
        </authorList>
    </citation>
    <scope>NUCLEOTIDE SEQUENCE [LARGE SCALE GENOMIC DNA]</scope>
    <source>
        <strain>GB-M1</strain>
    </source>
</reference>
<reference key="2">
    <citation type="journal article" date="2009" name="BMC Genomics">
        <title>Identification of transcriptional signals in Encephalitozoon cuniculi widespread among Microsporidia phylum: support for accurate structural genome annotation.</title>
        <authorList>
            <person name="Peyretaillade E."/>
            <person name="Goncalves O."/>
            <person name="Terrat S."/>
            <person name="Dugat-Bony E."/>
            <person name="Wincker P."/>
            <person name="Cornman R.S."/>
            <person name="Evans J.D."/>
            <person name="Delbac F."/>
            <person name="Peyret P."/>
        </authorList>
    </citation>
    <scope>GENOME REANNOTATION</scope>
    <source>
        <strain>GB-M1</strain>
    </source>
</reference>
<reference key="3">
    <citation type="journal article" date="2007" name="BMC Genomics">
        <title>The complement of protein kinases of the microsporidium Encephalitozoon cuniculi in relation to those of Saccharomyces cerevisiae and Schizosaccharomyces pombe.</title>
        <authorList>
            <person name="Miranda-Saavedra D."/>
            <person name="Stark M.J.R."/>
            <person name="Packer J.C."/>
            <person name="Vivares C.P."/>
            <person name="Doerig C."/>
            <person name="Barton G.J."/>
        </authorList>
    </citation>
    <scope>PREDICTION OF FUNCTION</scope>
</reference>